<name>LEU1_LISMH</name>
<keyword id="KW-0028">Amino-acid biosynthesis</keyword>
<keyword id="KW-0100">Branched-chain amino acid biosynthesis</keyword>
<keyword id="KW-0963">Cytoplasm</keyword>
<keyword id="KW-0432">Leucine biosynthesis</keyword>
<keyword id="KW-0464">Manganese</keyword>
<keyword id="KW-0479">Metal-binding</keyword>
<keyword id="KW-0808">Transferase</keyword>
<dbReference type="EC" id="2.3.3.13" evidence="1"/>
<dbReference type="EMBL" id="CP001175">
    <property type="protein sequence ID" value="ACK38930.1"/>
    <property type="molecule type" value="Genomic_DNA"/>
</dbReference>
<dbReference type="RefSeq" id="WP_012581035.1">
    <property type="nucleotide sequence ID" value="NC_011660.1"/>
</dbReference>
<dbReference type="SMR" id="B8DBU4"/>
<dbReference type="KEGG" id="lmh:LMHCC_0573"/>
<dbReference type="HOGENOM" id="CLU_022158_0_1_9"/>
<dbReference type="UniPathway" id="UPA00048">
    <property type="reaction ID" value="UER00070"/>
</dbReference>
<dbReference type="GO" id="GO:0005737">
    <property type="term" value="C:cytoplasm"/>
    <property type="evidence" value="ECO:0007669"/>
    <property type="project" value="UniProtKB-SubCell"/>
</dbReference>
<dbReference type="GO" id="GO:0003852">
    <property type="term" value="F:2-isopropylmalate synthase activity"/>
    <property type="evidence" value="ECO:0007669"/>
    <property type="project" value="UniProtKB-UniRule"/>
</dbReference>
<dbReference type="GO" id="GO:0003985">
    <property type="term" value="F:acetyl-CoA C-acetyltransferase activity"/>
    <property type="evidence" value="ECO:0007669"/>
    <property type="project" value="UniProtKB-UniRule"/>
</dbReference>
<dbReference type="GO" id="GO:0030145">
    <property type="term" value="F:manganese ion binding"/>
    <property type="evidence" value="ECO:0007669"/>
    <property type="project" value="UniProtKB-UniRule"/>
</dbReference>
<dbReference type="GO" id="GO:0009098">
    <property type="term" value="P:L-leucine biosynthetic process"/>
    <property type="evidence" value="ECO:0007669"/>
    <property type="project" value="UniProtKB-UniRule"/>
</dbReference>
<dbReference type="CDD" id="cd07940">
    <property type="entry name" value="DRE_TIM_IPMS"/>
    <property type="match status" value="1"/>
</dbReference>
<dbReference type="FunFam" id="1.10.238.260:FF:000001">
    <property type="entry name" value="2-isopropylmalate synthase"/>
    <property type="match status" value="1"/>
</dbReference>
<dbReference type="FunFam" id="3.20.20.70:FF:000010">
    <property type="entry name" value="2-isopropylmalate synthase"/>
    <property type="match status" value="1"/>
</dbReference>
<dbReference type="FunFam" id="3.30.160.270:FF:000003">
    <property type="entry name" value="2-isopropylmalate synthase"/>
    <property type="match status" value="1"/>
</dbReference>
<dbReference type="Gene3D" id="1.10.238.260">
    <property type="match status" value="1"/>
</dbReference>
<dbReference type="Gene3D" id="3.30.160.270">
    <property type="match status" value="1"/>
</dbReference>
<dbReference type="Gene3D" id="3.20.20.70">
    <property type="entry name" value="Aldolase class I"/>
    <property type="match status" value="1"/>
</dbReference>
<dbReference type="HAMAP" id="MF_01025">
    <property type="entry name" value="LeuA_type1"/>
    <property type="match status" value="1"/>
</dbReference>
<dbReference type="InterPro" id="IPR050073">
    <property type="entry name" value="2-IPM_HCS-like"/>
</dbReference>
<dbReference type="InterPro" id="IPR013709">
    <property type="entry name" value="2-isopropylmalate_synth_dimer"/>
</dbReference>
<dbReference type="InterPro" id="IPR002034">
    <property type="entry name" value="AIPM/Hcit_synth_CS"/>
</dbReference>
<dbReference type="InterPro" id="IPR013785">
    <property type="entry name" value="Aldolase_TIM"/>
</dbReference>
<dbReference type="InterPro" id="IPR054691">
    <property type="entry name" value="LeuA/HCS_post-cat"/>
</dbReference>
<dbReference type="InterPro" id="IPR036230">
    <property type="entry name" value="LeuA_allosteric_dom_sf"/>
</dbReference>
<dbReference type="InterPro" id="IPR005671">
    <property type="entry name" value="LeuA_bact_synth"/>
</dbReference>
<dbReference type="InterPro" id="IPR000891">
    <property type="entry name" value="PYR_CT"/>
</dbReference>
<dbReference type="NCBIfam" id="TIGR00973">
    <property type="entry name" value="leuA_bact"/>
    <property type="match status" value="1"/>
</dbReference>
<dbReference type="NCBIfam" id="NF002086">
    <property type="entry name" value="PRK00915.1-3"/>
    <property type="match status" value="1"/>
</dbReference>
<dbReference type="NCBIfam" id="NF002088">
    <property type="entry name" value="PRK00915.1-5"/>
    <property type="match status" value="1"/>
</dbReference>
<dbReference type="PANTHER" id="PTHR10277:SF9">
    <property type="entry name" value="2-ISOPROPYLMALATE SYNTHASE 1, CHLOROPLASTIC-RELATED"/>
    <property type="match status" value="1"/>
</dbReference>
<dbReference type="PANTHER" id="PTHR10277">
    <property type="entry name" value="HOMOCITRATE SYNTHASE-RELATED"/>
    <property type="match status" value="1"/>
</dbReference>
<dbReference type="Pfam" id="PF22617">
    <property type="entry name" value="HCS_D2"/>
    <property type="match status" value="1"/>
</dbReference>
<dbReference type="Pfam" id="PF00682">
    <property type="entry name" value="HMGL-like"/>
    <property type="match status" value="1"/>
</dbReference>
<dbReference type="Pfam" id="PF08502">
    <property type="entry name" value="LeuA_dimer"/>
    <property type="match status" value="1"/>
</dbReference>
<dbReference type="SMART" id="SM00917">
    <property type="entry name" value="LeuA_dimer"/>
    <property type="match status" value="1"/>
</dbReference>
<dbReference type="SUPFAM" id="SSF110921">
    <property type="entry name" value="2-isopropylmalate synthase LeuA, allosteric (dimerisation) domain"/>
    <property type="match status" value="1"/>
</dbReference>
<dbReference type="SUPFAM" id="SSF51569">
    <property type="entry name" value="Aldolase"/>
    <property type="match status" value="1"/>
</dbReference>
<dbReference type="PROSITE" id="PS00815">
    <property type="entry name" value="AIPM_HOMOCIT_SYNTH_1"/>
    <property type="match status" value="1"/>
</dbReference>
<dbReference type="PROSITE" id="PS00816">
    <property type="entry name" value="AIPM_HOMOCIT_SYNTH_2"/>
    <property type="match status" value="1"/>
</dbReference>
<dbReference type="PROSITE" id="PS50991">
    <property type="entry name" value="PYR_CT"/>
    <property type="match status" value="1"/>
</dbReference>
<gene>
    <name evidence="1" type="primary">leuA</name>
    <name type="ordered locus">LMHCC_0573</name>
</gene>
<evidence type="ECO:0000255" key="1">
    <source>
        <dbReference type="HAMAP-Rule" id="MF_01025"/>
    </source>
</evidence>
<accession>B8DBU4</accession>
<proteinExistence type="inferred from homology"/>
<sequence>MKKIQFFDTTLRDGEQTPGVNFDVKEKIQIALQLEKLGIDVIEAGFPISSPGDFECVKAIAKAIKHCSVTGLARCVEGDIDRAEEALKDAVSPQIHIFLATSDVHMEYKLKMSRAEVLASIKHHISYARQKFEVVQFSPEDATRSDRAFLIEAVQTAIDAGATVINIPDTVGYTNPTEFGQLFQDLRREIKQFDDIIFASHCHDDLGMATANALAAIENGARRVEGTINGIGERAGNTALEEVAVALHIRKDFYQAETNIVLNQFKNSSDLISRLSGMPVPRNKAVIGGNAYAHESGIHQDGVLKNPDTYEIITPALVGVDKNSLPLGKLSGKHAFQTRMEEMGYNLSEQELKDAFKRFKQLADAKKEVTEDDLHALILGQSSESADDFELKHLQVQYVTGGVQGAIVRIAERDGTLIEDAATGSGSIEAIYNTINRLMKQNIELTNYHIQAITAGQDAQAEVHVVIKDKSGAEFHGIGIDFDVLTASAKAYLQASAKSKTGSKQADFEEVK</sequence>
<comment type="function">
    <text evidence="1">Catalyzes the condensation of the acetyl group of acetyl-CoA with 3-methyl-2-oxobutanoate (2-ketoisovalerate) to form 3-carboxy-3-hydroxy-4-methylpentanoate (2-isopropylmalate).</text>
</comment>
<comment type="catalytic activity">
    <reaction evidence="1">
        <text>3-methyl-2-oxobutanoate + acetyl-CoA + H2O = (2S)-2-isopropylmalate + CoA + H(+)</text>
        <dbReference type="Rhea" id="RHEA:21524"/>
        <dbReference type="ChEBI" id="CHEBI:1178"/>
        <dbReference type="ChEBI" id="CHEBI:11851"/>
        <dbReference type="ChEBI" id="CHEBI:15377"/>
        <dbReference type="ChEBI" id="CHEBI:15378"/>
        <dbReference type="ChEBI" id="CHEBI:57287"/>
        <dbReference type="ChEBI" id="CHEBI:57288"/>
        <dbReference type="EC" id="2.3.3.13"/>
    </reaction>
</comment>
<comment type="cofactor">
    <cofactor evidence="1">
        <name>Mn(2+)</name>
        <dbReference type="ChEBI" id="CHEBI:29035"/>
    </cofactor>
</comment>
<comment type="pathway">
    <text evidence="1">Amino-acid biosynthesis; L-leucine biosynthesis; L-leucine from 3-methyl-2-oxobutanoate: step 1/4.</text>
</comment>
<comment type="subunit">
    <text evidence="1">Homodimer.</text>
</comment>
<comment type="subcellular location">
    <subcellularLocation>
        <location evidence="1">Cytoplasm</location>
    </subcellularLocation>
</comment>
<comment type="similarity">
    <text evidence="1">Belongs to the alpha-IPM synthase/homocitrate synthase family. LeuA type 1 subfamily.</text>
</comment>
<reference key="1">
    <citation type="journal article" date="2011" name="J. Bacteriol.">
        <title>Genome sequence of lineage III Listeria monocytogenes strain HCC23.</title>
        <authorList>
            <person name="Steele C.L."/>
            <person name="Donaldson J.R."/>
            <person name="Paul D."/>
            <person name="Banes M.M."/>
            <person name="Arick T."/>
            <person name="Bridges S.M."/>
            <person name="Lawrence M.L."/>
        </authorList>
    </citation>
    <scope>NUCLEOTIDE SEQUENCE [LARGE SCALE GENOMIC DNA]</scope>
    <source>
        <strain>HCC23</strain>
    </source>
</reference>
<feature type="chain" id="PRO_1000149216" description="2-isopropylmalate synthase">
    <location>
        <begin position="1"/>
        <end position="512"/>
    </location>
</feature>
<feature type="domain" description="Pyruvate carboxyltransferase" evidence="1">
    <location>
        <begin position="4"/>
        <end position="266"/>
    </location>
</feature>
<feature type="region of interest" description="Regulatory domain" evidence="1">
    <location>
        <begin position="390"/>
        <end position="512"/>
    </location>
</feature>
<feature type="binding site" evidence="1">
    <location>
        <position position="13"/>
    </location>
    <ligand>
        <name>Mn(2+)</name>
        <dbReference type="ChEBI" id="CHEBI:29035"/>
    </ligand>
</feature>
<feature type="binding site" evidence="1">
    <location>
        <position position="201"/>
    </location>
    <ligand>
        <name>Mn(2+)</name>
        <dbReference type="ChEBI" id="CHEBI:29035"/>
    </ligand>
</feature>
<feature type="binding site" evidence="1">
    <location>
        <position position="203"/>
    </location>
    <ligand>
        <name>Mn(2+)</name>
        <dbReference type="ChEBI" id="CHEBI:29035"/>
    </ligand>
</feature>
<feature type="binding site" evidence="1">
    <location>
        <position position="237"/>
    </location>
    <ligand>
        <name>Mn(2+)</name>
        <dbReference type="ChEBI" id="CHEBI:29035"/>
    </ligand>
</feature>
<protein>
    <recommendedName>
        <fullName evidence="1">2-isopropylmalate synthase</fullName>
        <ecNumber evidence="1">2.3.3.13</ecNumber>
    </recommendedName>
    <alternativeName>
        <fullName evidence="1">Alpha-IPM synthase</fullName>
    </alternativeName>
    <alternativeName>
        <fullName evidence="1">Alpha-isopropylmalate synthase</fullName>
    </alternativeName>
</protein>
<organism>
    <name type="scientific">Listeria monocytogenes serotype 4a (strain HCC23)</name>
    <dbReference type="NCBI Taxonomy" id="552536"/>
    <lineage>
        <taxon>Bacteria</taxon>
        <taxon>Bacillati</taxon>
        <taxon>Bacillota</taxon>
        <taxon>Bacilli</taxon>
        <taxon>Bacillales</taxon>
        <taxon>Listeriaceae</taxon>
        <taxon>Listeria</taxon>
    </lineage>
</organism>